<sequence length="199" mass="21532">MPADTAPMNLTHHFLIAMPGVEDASFSRSVVYLCEHSERGALGLIINKPTPISLEGLFEKVDLSLGREDLTLQPVFQGGPVQTERGFVLHEAMRGPQESEDESPYASTMTIPGGLEMTTSKDVLEALAHGAGPRRVLVTLGYSAWGEGQLESELAENSWLTVGADVSVIFETPVQERYDRALGLLGLQSWMLSPEAGHA</sequence>
<evidence type="ECO:0000255" key="1">
    <source>
        <dbReference type="HAMAP-Rule" id="MF_00758"/>
    </source>
</evidence>
<keyword id="KW-1185">Reference proteome</keyword>
<accession>B9MF60</accession>
<dbReference type="EMBL" id="CP001392">
    <property type="protein sequence ID" value="ACM34330.1"/>
    <property type="molecule type" value="Genomic_DNA"/>
</dbReference>
<dbReference type="RefSeq" id="WP_011806670.1">
    <property type="nucleotide sequence ID" value="NC_011992.1"/>
</dbReference>
<dbReference type="SMR" id="B9MF60"/>
<dbReference type="KEGG" id="dia:Dtpsy_2896"/>
<dbReference type="eggNOG" id="COG1678">
    <property type="taxonomic scope" value="Bacteria"/>
</dbReference>
<dbReference type="HOGENOM" id="CLU_057596_1_0_4"/>
<dbReference type="Proteomes" id="UP000000450">
    <property type="component" value="Chromosome"/>
</dbReference>
<dbReference type="GO" id="GO:0005829">
    <property type="term" value="C:cytosol"/>
    <property type="evidence" value="ECO:0007669"/>
    <property type="project" value="TreeGrafter"/>
</dbReference>
<dbReference type="Gene3D" id="3.40.1740.10">
    <property type="entry name" value="VC0467-like"/>
    <property type="match status" value="1"/>
</dbReference>
<dbReference type="HAMAP" id="MF_00758">
    <property type="entry name" value="UPF0301"/>
    <property type="match status" value="1"/>
</dbReference>
<dbReference type="InterPro" id="IPR003774">
    <property type="entry name" value="AlgH-like"/>
</dbReference>
<dbReference type="NCBIfam" id="NF001266">
    <property type="entry name" value="PRK00228.1-1"/>
    <property type="match status" value="1"/>
</dbReference>
<dbReference type="PANTHER" id="PTHR30327">
    <property type="entry name" value="UNCHARACTERIZED PROTEIN YQGE"/>
    <property type="match status" value="1"/>
</dbReference>
<dbReference type="PANTHER" id="PTHR30327:SF1">
    <property type="entry name" value="UPF0301 PROTEIN YQGE"/>
    <property type="match status" value="1"/>
</dbReference>
<dbReference type="Pfam" id="PF02622">
    <property type="entry name" value="DUF179"/>
    <property type="match status" value="1"/>
</dbReference>
<dbReference type="SUPFAM" id="SSF143456">
    <property type="entry name" value="VC0467-like"/>
    <property type="match status" value="1"/>
</dbReference>
<name>Y2896_ACIET</name>
<organism>
    <name type="scientific">Acidovorax ebreus (strain TPSY)</name>
    <name type="common">Diaphorobacter sp. (strain TPSY)</name>
    <dbReference type="NCBI Taxonomy" id="535289"/>
    <lineage>
        <taxon>Bacteria</taxon>
        <taxon>Pseudomonadati</taxon>
        <taxon>Pseudomonadota</taxon>
        <taxon>Betaproteobacteria</taxon>
        <taxon>Burkholderiales</taxon>
        <taxon>Comamonadaceae</taxon>
        <taxon>Diaphorobacter</taxon>
    </lineage>
</organism>
<feature type="chain" id="PRO_1000148380" description="UPF0301 protein Dtpsy_2896">
    <location>
        <begin position="1"/>
        <end position="199"/>
    </location>
</feature>
<comment type="similarity">
    <text evidence="1">Belongs to the UPF0301 (AlgH) family.</text>
</comment>
<gene>
    <name type="ordered locus">Dtpsy_2896</name>
</gene>
<protein>
    <recommendedName>
        <fullName evidence="1">UPF0301 protein Dtpsy_2896</fullName>
    </recommendedName>
</protein>
<reference key="1">
    <citation type="submission" date="2009-01" db="EMBL/GenBank/DDBJ databases">
        <title>Complete sequence of Diaphorobacter sp. TPSY.</title>
        <authorList>
            <consortium name="US DOE Joint Genome Institute"/>
            <person name="Lucas S."/>
            <person name="Copeland A."/>
            <person name="Lapidus A."/>
            <person name="Glavina del Rio T."/>
            <person name="Tice H."/>
            <person name="Bruce D."/>
            <person name="Goodwin L."/>
            <person name="Pitluck S."/>
            <person name="Chertkov O."/>
            <person name="Brettin T."/>
            <person name="Detter J.C."/>
            <person name="Han C."/>
            <person name="Larimer F."/>
            <person name="Land M."/>
            <person name="Hauser L."/>
            <person name="Kyrpides N."/>
            <person name="Mikhailova N."/>
            <person name="Coates J.D."/>
        </authorList>
    </citation>
    <scope>NUCLEOTIDE SEQUENCE [LARGE SCALE GENOMIC DNA]</scope>
    <source>
        <strain>TPSY</strain>
    </source>
</reference>
<proteinExistence type="inferred from homology"/>